<dbReference type="EMBL" id="CP000323">
    <property type="protein sequence ID" value="ABE74590.1"/>
    <property type="molecule type" value="Genomic_DNA"/>
</dbReference>
<dbReference type="RefSeq" id="WP_011513153.1">
    <property type="nucleotide sequence ID" value="NC_007969.1"/>
</dbReference>
<dbReference type="SMR" id="Q1QCL3"/>
<dbReference type="STRING" id="335284.Pcryo_0807"/>
<dbReference type="KEGG" id="pcr:Pcryo_0807"/>
<dbReference type="eggNOG" id="COG3100">
    <property type="taxonomic scope" value="Bacteria"/>
</dbReference>
<dbReference type="HOGENOM" id="CLU_155118_0_1_6"/>
<dbReference type="Proteomes" id="UP000002425">
    <property type="component" value="Chromosome"/>
</dbReference>
<dbReference type="Gene3D" id="3.10.510.20">
    <property type="entry name" value="YcgL domain"/>
    <property type="match status" value="1"/>
</dbReference>
<dbReference type="HAMAP" id="MF_01866">
    <property type="entry name" value="UPF0745"/>
    <property type="match status" value="1"/>
</dbReference>
<dbReference type="InterPro" id="IPR038068">
    <property type="entry name" value="YcgL-like_sf"/>
</dbReference>
<dbReference type="InterPro" id="IPR027354">
    <property type="entry name" value="YcgL_dom"/>
</dbReference>
<dbReference type="PANTHER" id="PTHR38109">
    <property type="entry name" value="PROTEIN YCGL"/>
    <property type="match status" value="1"/>
</dbReference>
<dbReference type="PANTHER" id="PTHR38109:SF1">
    <property type="entry name" value="PROTEIN YCGL"/>
    <property type="match status" value="1"/>
</dbReference>
<dbReference type="Pfam" id="PF05166">
    <property type="entry name" value="YcgL"/>
    <property type="match status" value="1"/>
</dbReference>
<dbReference type="SUPFAM" id="SSF160191">
    <property type="entry name" value="YcgL-like"/>
    <property type="match status" value="1"/>
</dbReference>
<dbReference type="PROSITE" id="PS51648">
    <property type="entry name" value="YCGL"/>
    <property type="match status" value="1"/>
</dbReference>
<proteinExistence type="inferred from homology"/>
<accession>Q1QCL3</accession>
<protein>
    <recommendedName>
        <fullName evidence="1">YcgL domain-containing protein Pcryo_0807</fullName>
    </recommendedName>
</protein>
<evidence type="ECO:0000255" key="1">
    <source>
        <dbReference type="HAMAP-Rule" id="MF_01866"/>
    </source>
</evidence>
<name>Y807_PSYCK</name>
<sequence>MHCDIYKFLKHDDMYIYIARPDYPNDTDEIKDWLGVLPKDFRAGLGRSKFVMHLDLATTPTLARVDKEEVLAKLASQGYFVQLPPQDVMRRQAELRARESQDSIYNT</sequence>
<reference key="1">
    <citation type="submission" date="2006-03" db="EMBL/GenBank/DDBJ databases">
        <title>Complete sequence of chromosome of Psychrobacter cryohalolentis K5.</title>
        <authorList>
            <consortium name="US DOE Joint Genome Institute"/>
            <person name="Copeland A."/>
            <person name="Lucas S."/>
            <person name="Lapidus A."/>
            <person name="Barry K."/>
            <person name="Detter J.C."/>
            <person name="Glavina T."/>
            <person name="Hammon N."/>
            <person name="Israni S."/>
            <person name="Dalin E."/>
            <person name="Tice H."/>
            <person name="Pitluck S."/>
            <person name="Brettin T."/>
            <person name="Bruce D."/>
            <person name="Han C."/>
            <person name="Tapia R."/>
            <person name="Sims D.R."/>
            <person name="Gilna P."/>
            <person name="Schmutz J."/>
            <person name="Larimer F."/>
            <person name="Land M."/>
            <person name="Hauser L."/>
            <person name="Kyrpides N."/>
            <person name="Kim E."/>
            <person name="Richardson P."/>
        </authorList>
    </citation>
    <scope>NUCLEOTIDE SEQUENCE [LARGE SCALE GENOMIC DNA]</scope>
    <source>
        <strain>ATCC BAA-1226 / DSM 17306 / VKM B-2378 / K5</strain>
    </source>
</reference>
<gene>
    <name type="ordered locus">Pcryo_0807</name>
</gene>
<organism>
    <name type="scientific">Psychrobacter cryohalolentis (strain ATCC BAA-1226 / DSM 17306 / VKM B-2378 / K5)</name>
    <dbReference type="NCBI Taxonomy" id="335284"/>
    <lineage>
        <taxon>Bacteria</taxon>
        <taxon>Pseudomonadati</taxon>
        <taxon>Pseudomonadota</taxon>
        <taxon>Gammaproteobacteria</taxon>
        <taxon>Moraxellales</taxon>
        <taxon>Moraxellaceae</taxon>
        <taxon>Psychrobacter</taxon>
    </lineage>
</organism>
<feature type="chain" id="PRO_0000375344" description="YcgL domain-containing protein Pcryo_0807">
    <location>
        <begin position="1"/>
        <end position="107"/>
    </location>
</feature>
<feature type="domain" description="YcgL" evidence="1">
    <location>
        <begin position="1"/>
        <end position="95"/>
    </location>
</feature>